<sequence>MSDRQQVTNAKGERIAIVAGLRTPFAKQATAFHGVSALDMGKMVVNELLARSELDPKLIEQLVYGQVVQMPAAPNIAREIVLGTGMDVSTDAYSVTRACATSFQSAVNVAESIMTGNIEIGIAGGADSSSVLPIGVSKKLAHALVDLNKARSFGQKLQIFRRLGIKDLLPVPPAVAEYSTGLSMGQTAEQMAKTYNISRADQDALAHRSHTLASETWASGHLRDEVMVAHVPPYKQFIERDNNIRENSDLSSYAKLRPAFDKKHGSVTAANSTPLTDGASAIILMSEGRAKALGYQPIGYIKSYAFTAIDVWQDMLMGPSYATPLALKRAGMELEDLTLIEMHEAFAAQTLANMQMFASKKFAEEKLGRNRAIGEIDMSKFNVLGGSLAYGHPFAATGTRLITQVCRELKRRGGGTGLATACAAGGLGAAMIVEVE</sequence>
<keyword id="KW-0012">Acyltransferase</keyword>
<keyword id="KW-0963">Cytoplasm</keyword>
<keyword id="KW-0276">Fatty acid metabolism</keyword>
<keyword id="KW-0442">Lipid degradation</keyword>
<keyword id="KW-0443">Lipid metabolism</keyword>
<keyword id="KW-0808">Transferase</keyword>
<feature type="chain" id="PRO_1000069515" description="3-ketoacyl-CoA thiolase">
    <location>
        <begin position="1"/>
        <end position="436"/>
    </location>
</feature>
<feature type="active site" description="Acyl-thioester intermediate" evidence="1">
    <location>
        <position position="99"/>
    </location>
</feature>
<feature type="active site" description="Proton acceptor" evidence="1">
    <location>
        <position position="392"/>
    </location>
</feature>
<feature type="active site" description="Proton acceptor" evidence="1">
    <location>
        <position position="422"/>
    </location>
</feature>
<dbReference type="EC" id="2.3.1.16" evidence="1"/>
<dbReference type="EMBL" id="CP000444">
    <property type="protein sequence ID" value="ABI42471.1"/>
    <property type="molecule type" value="Genomic_DNA"/>
</dbReference>
<dbReference type="SMR" id="Q0HWN4"/>
<dbReference type="KEGG" id="shm:Shewmr7_1472"/>
<dbReference type="HOGENOM" id="CLU_031026_2_0_6"/>
<dbReference type="UniPathway" id="UPA00659"/>
<dbReference type="GO" id="GO:0005829">
    <property type="term" value="C:cytosol"/>
    <property type="evidence" value="ECO:0007669"/>
    <property type="project" value="TreeGrafter"/>
</dbReference>
<dbReference type="GO" id="GO:0003988">
    <property type="term" value="F:acetyl-CoA C-acyltransferase activity"/>
    <property type="evidence" value="ECO:0007669"/>
    <property type="project" value="UniProtKB-UniRule"/>
</dbReference>
<dbReference type="GO" id="GO:0006635">
    <property type="term" value="P:fatty acid beta-oxidation"/>
    <property type="evidence" value="ECO:0007669"/>
    <property type="project" value="UniProtKB-UniRule"/>
</dbReference>
<dbReference type="CDD" id="cd00751">
    <property type="entry name" value="thiolase"/>
    <property type="match status" value="1"/>
</dbReference>
<dbReference type="FunFam" id="3.40.47.10:FF:000011">
    <property type="entry name" value="3-ketoacyl-CoA thiolase"/>
    <property type="match status" value="1"/>
</dbReference>
<dbReference type="Gene3D" id="3.40.47.10">
    <property type="match status" value="1"/>
</dbReference>
<dbReference type="HAMAP" id="MF_01618">
    <property type="entry name" value="FadI"/>
    <property type="match status" value="1"/>
</dbReference>
<dbReference type="InterPro" id="IPR012806">
    <property type="entry name" value="Ac-CoA_C-AcTrfase_FadI"/>
</dbReference>
<dbReference type="InterPro" id="IPR002155">
    <property type="entry name" value="Thiolase"/>
</dbReference>
<dbReference type="InterPro" id="IPR016039">
    <property type="entry name" value="Thiolase-like"/>
</dbReference>
<dbReference type="InterPro" id="IPR020610">
    <property type="entry name" value="Thiolase_AS"/>
</dbReference>
<dbReference type="InterPro" id="IPR020617">
    <property type="entry name" value="Thiolase_C"/>
</dbReference>
<dbReference type="InterPro" id="IPR020613">
    <property type="entry name" value="Thiolase_CS"/>
</dbReference>
<dbReference type="InterPro" id="IPR020616">
    <property type="entry name" value="Thiolase_N"/>
</dbReference>
<dbReference type="NCBIfam" id="TIGR01930">
    <property type="entry name" value="AcCoA-C-Actrans"/>
    <property type="match status" value="1"/>
</dbReference>
<dbReference type="NCBIfam" id="TIGR02446">
    <property type="entry name" value="FadI"/>
    <property type="match status" value="1"/>
</dbReference>
<dbReference type="NCBIfam" id="NF006516">
    <property type="entry name" value="PRK08963.1"/>
    <property type="match status" value="1"/>
</dbReference>
<dbReference type="PANTHER" id="PTHR18919:SF107">
    <property type="entry name" value="ACETYL-COA ACETYLTRANSFERASE, CYTOSOLIC"/>
    <property type="match status" value="1"/>
</dbReference>
<dbReference type="PANTHER" id="PTHR18919">
    <property type="entry name" value="ACETYL-COA C-ACYLTRANSFERASE"/>
    <property type="match status" value="1"/>
</dbReference>
<dbReference type="Pfam" id="PF02803">
    <property type="entry name" value="Thiolase_C"/>
    <property type="match status" value="1"/>
</dbReference>
<dbReference type="Pfam" id="PF00108">
    <property type="entry name" value="Thiolase_N"/>
    <property type="match status" value="1"/>
</dbReference>
<dbReference type="PIRSF" id="PIRSF000429">
    <property type="entry name" value="Ac-CoA_Ac_transf"/>
    <property type="match status" value="1"/>
</dbReference>
<dbReference type="SUPFAM" id="SSF53901">
    <property type="entry name" value="Thiolase-like"/>
    <property type="match status" value="2"/>
</dbReference>
<dbReference type="PROSITE" id="PS00737">
    <property type="entry name" value="THIOLASE_2"/>
    <property type="match status" value="1"/>
</dbReference>
<dbReference type="PROSITE" id="PS00099">
    <property type="entry name" value="THIOLASE_3"/>
    <property type="match status" value="1"/>
</dbReference>
<protein>
    <recommendedName>
        <fullName evidence="1">3-ketoacyl-CoA thiolase</fullName>
        <ecNumber evidence="1">2.3.1.16</ecNumber>
    </recommendedName>
    <alternativeName>
        <fullName evidence="1">ACSs</fullName>
    </alternativeName>
    <alternativeName>
        <fullName evidence="1">Acetyl-CoA acyltransferase</fullName>
    </alternativeName>
    <alternativeName>
        <fullName evidence="1">Acyl-CoA ligase</fullName>
    </alternativeName>
    <alternativeName>
        <fullName evidence="1">Beta-ketothiolase</fullName>
    </alternativeName>
    <alternativeName>
        <fullName evidence="1">Fatty acid oxidation complex subunit beta</fullName>
    </alternativeName>
</protein>
<evidence type="ECO:0000255" key="1">
    <source>
        <dbReference type="HAMAP-Rule" id="MF_01618"/>
    </source>
</evidence>
<accession>Q0HWN4</accession>
<gene>
    <name evidence="1" type="primary">fadI</name>
    <name type="ordered locus">Shewmr7_1472</name>
</gene>
<reference key="1">
    <citation type="submission" date="2006-08" db="EMBL/GenBank/DDBJ databases">
        <title>Complete sequence of chromosome 1 of Shewanella sp. MR-7.</title>
        <authorList>
            <person name="Copeland A."/>
            <person name="Lucas S."/>
            <person name="Lapidus A."/>
            <person name="Barry K."/>
            <person name="Detter J.C."/>
            <person name="Glavina del Rio T."/>
            <person name="Hammon N."/>
            <person name="Israni S."/>
            <person name="Dalin E."/>
            <person name="Tice H."/>
            <person name="Pitluck S."/>
            <person name="Kiss H."/>
            <person name="Brettin T."/>
            <person name="Bruce D."/>
            <person name="Han C."/>
            <person name="Tapia R."/>
            <person name="Gilna P."/>
            <person name="Schmutz J."/>
            <person name="Larimer F."/>
            <person name="Land M."/>
            <person name="Hauser L."/>
            <person name="Kyrpides N."/>
            <person name="Mikhailova N."/>
            <person name="Nealson K."/>
            <person name="Konstantinidis K."/>
            <person name="Klappenbach J."/>
            <person name="Tiedje J."/>
            <person name="Richardson P."/>
        </authorList>
    </citation>
    <scope>NUCLEOTIDE SEQUENCE [LARGE SCALE GENOMIC DNA]</scope>
    <source>
        <strain>MR-7</strain>
    </source>
</reference>
<proteinExistence type="inferred from homology"/>
<comment type="function">
    <text evidence="1">Catalyzes the final step of fatty acid oxidation in which acetyl-CoA is released and the CoA ester of a fatty acid two carbons shorter is formed.</text>
</comment>
<comment type="catalytic activity">
    <reaction evidence="1">
        <text>an acyl-CoA + acetyl-CoA = a 3-oxoacyl-CoA + CoA</text>
        <dbReference type="Rhea" id="RHEA:21564"/>
        <dbReference type="ChEBI" id="CHEBI:57287"/>
        <dbReference type="ChEBI" id="CHEBI:57288"/>
        <dbReference type="ChEBI" id="CHEBI:58342"/>
        <dbReference type="ChEBI" id="CHEBI:90726"/>
        <dbReference type="EC" id="2.3.1.16"/>
    </reaction>
</comment>
<comment type="pathway">
    <text evidence="1">Lipid metabolism; fatty acid beta-oxidation.</text>
</comment>
<comment type="subunit">
    <text evidence="1">Heterotetramer of two alpha chains (FadJ) and two beta chains (FadI).</text>
</comment>
<comment type="subcellular location">
    <subcellularLocation>
        <location evidence="1">Cytoplasm</location>
    </subcellularLocation>
</comment>
<comment type="similarity">
    <text evidence="1">Belongs to the thiolase-like superfamily. Thiolase family.</text>
</comment>
<organism>
    <name type="scientific">Shewanella sp. (strain MR-7)</name>
    <dbReference type="NCBI Taxonomy" id="60481"/>
    <lineage>
        <taxon>Bacteria</taxon>
        <taxon>Pseudomonadati</taxon>
        <taxon>Pseudomonadota</taxon>
        <taxon>Gammaproteobacteria</taxon>
        <taxon>Alteromonadales</taxon>
        <taxon>Shewanellaceae</taxon>
        <taxon>Shewanella</taxon>
    </lineage>
</organism>
<name>FADI_SHESR</name>